<evidence type="ECO:0000255" key="1">
    <source>
        <dbReference type="HAMAP-Rule" id="MF_01328"/>
    </source>
</evidence>
<evidence type="ECO:0000256" key="2">
    <source>
        <dbReference type="SAM" id="MobiDB-lite"/>
    </source>
</evidence>
<evidence type="ECO:0000305" key="3"/>
<protein>
    <recommendedName>
        <fullName evidence="1">Large ribosomal subunit protein uL4</fullName>
    </recommendedName>
    <alternativeName>
        <fullName evidence="3">50S ribosomal protein L4</fullName>
    </alternativeName>
</protein>
<keyword id="KW-0687">Ribonucleoprotein</keyword>
<keyword id="KW-0689">Ribosomal protein</keyword>
<keyword id="KW-0694">RNA-binding</keyword>
<keyword id="KW-0699">rRNA-binding</keyword>
<accession>Q2W2J2</accession>
<feature type="chain" id="PRO_0000242391" description="Large ribosomal subunit protein uL4">
    <location>
        <begin position="1"/>
        <end position="206"/>
    </location>
</feature>
<feature type="region of interest" description="Disordered" evidence="2">
    <location>
        <begin position="49"/>
        <end position="73"/>
    </location>
</feature>
<organism>
    <name type="scientific">Paramagnetospirillum magneticum (strain ATCC 700264 / AMB-1)</name>
    <name type="common">Magnetospirillum magneticum</name>
    <dbReference type="NCBI Taxonomy" id="342108"/>
    <lineage>
        <taxon>Bacteria</taxon>
        <taxon>Pseudomonadati</taxon>
        <taxon>Pseudomonadota</taxon>
        <taxon>Alphaproteobacteria</taxon>
        <taxon>Rhodospirillales</taxon>
        <taxon>Magnetospirillaceae</taxon>
        <taxon>Paramagnetospirillum</taxon>
    </lineage>
</organism>
<reference key="1">
    <citation type="journal article" date="2005" name="DNA Res.">
        <title>Complete genome sequence of the facultative anaerobic magnetotactic bacterium Magnetospirillum sp. strain AMB-1.</title>
        <authorList>
            <person name="Matsunaga T."/>
            <person name="Okamura Y."/>
            <person name="Fukuda Y."/>
            <person name="Wahyudi A.T."/>
            <person name="Murase Y."/>
            <person name="Takeyama H."/>
        </authorList>
    </citation>
    <scope>NUCLEOTIDE SEQUENCE [LARGE SCALE GENOMIC DNA]</scope>
    <source>
        <strain>ATCC 700264 / AMB-1</strain>
    </source>
</reference>
<comment type="function">
    <text evidence="1">One of the primary rRNA binding proteins, this protein initially binds near the 5'-end of the 23S rRNA. It is important during the early stages of 50S assembly. It makes multiple contacts with different domains of the 23S rRNA in the assembled 50S subunit and ribosome.</text>
</comment>
<comment type="function">
    <text evidence="1">Forms part of the polypeptide exit tunnel.</text>
</comment>
<comment type="subunit">
    <text evidence="1">Part of the 50S ribosomal subunit.</text>
</comment>
<comment type="similarity">
    <text evidence="1">Belongs to the universal ribosomal protein uL4 family.</text>
</comment>
<dbReference type="EMBL" id="AP007255">
    <property type="protein sequence ID" value="BAE51933.1"/>
    <property type="molecule type" value="Genomic_DNA"/>
</dbReference>
<dbReference type="RefSeq" id="WP_011385498.1">
    <property type="nucleotide sequence ID" value="NC_007626.1"/>
</dbReference>
<dbReference type="SMR" id="Q2W2J2"/>
<dbReference type="STRING" id="342108.amb3129"/>
<dbReference type="KEGG" id="mag:amb3129"/>
<dbReference type="HOGENOM" id="CLU_041575_5_1_5"/>
<dbReference type="OrthoDB" id="9803201at2"/>
<dbReference type="Proteomes" id="UP000007058">
    <property type="component" value="Chromosome"/>
</dbReference>
<dbReference type="GO" id="GO:1990904">
    <property type="term" value="C:ribonucleoprotein complex"/>
    <property type="evidence" value="ECO:0007669"/>
    <property type="project" value="UniProtKB-KW"/>
</dbReference>
<dbReference type="GO" id="GO:0005840">
    <property type="term" value="C:ribosome"/>
    <property type="evidence" value="ECO:0007669"/>
    <property type="project" value="UniProtKB-KW"/>
</dbReference>
<dbReference type="GO" id="GO:0019843">
    <property type="term" value="F:rRNA binding"/>
    <property type="evidence" value="ECO:0007669"/>
    <property type="project" value="UniProtKB-UniRule"/>
</dbReference>
<dbReference type="GO" id="GO:0003735">
    <property type="term" value="F:structural constituent of ribosome"/>
    <property type="evidence" value="ECO:0007669"/>
    <property type="project" value="InterPro"/>
</dbReference>
<dbReference type="GO" id="GO:0006412">
    <property type="term" value="P:translation"/>
    <property type="evidence" value="ECO:0007669"/>
    <property type="project" value="UniProtKB-UniRule"/>
</dbReference>
<dbReference type="Gene3D" id="3.40.1370.10">
    <property type="match status" value="1"/>
</dbReference>
<dbReference type="HAMAP" id="MF_01328_B">
    <property type="entry name" value="Ribosomal_uL4_B"/>
    <property type="match status" value="1"/>
</dbReference>
<dbReference type="InterPro" id="IPR002136">
    <property type="entry name" value="Ribosomal_uL4"/>
</dbReference>
<dbReference type="InterPro" id="IPR013005">
    <property type="entry name" value="Ribosomal_uL4-like"/>
</dbReference>
<dbReference type="InterPro" id="IPR023574">
    <property type="entry name" value="Ribosomal_uL4_dom_sf"/>
</dbReference>
<dbReference type="NCBIfam" id="TIGR03953">
    <property type="entry name" value="rplD_bact"/>
    <property type="match status" value="1"/>
</dbReference>
<dbReference type="PANTHER" id="PTHR10746">
    <property type="entry name" value="50S RIBOSOMAL PROTEIN L4"/>
    <property type="match status" value="1"/>
</dbReference>
<dbReference type="PANTHER" id="PTHR10746:SF6">
    <property type="entry name" value="LARGE RIBOSOMAL SUBUNIT PROTEIN UL4M"/>
    <property type="match status" value="1"/>
</dbReference>
<dbReference type="Pfam" id="PF00573">
    <property type="entry name" value="Ribosomal_L4"/>
    <property type="match status" value="1"/>
</dbReference>
<dbReference type="SUPFAM" id="SSF52166">
    <property type="entry name" value="Ribosomal protein L4"/>
    <property type="match status" value="1"/>
</dbReference>
<sequence length="206" mass="21926">MKTNVISLDNQTVGEIELADEIFGVPVRGDILFRAVNWQLAKRQSGNHKTKTISEISGTTKKPFAQKGGGRARQGSLRSAQFRGGSTIFGPVVRSHAHDLPKKVRKLALKTALSAKVADGKLIVVDAASAGSPKTKDLAARLGKLGLSSVLFIDGAAVDGNFALASRNIPYVDVLPTQGANVYDILRRDTLVLTKDAVAALEARLK</sequence>
<proteinExistence type="inferred from homology"/>
<name>RL4_PARM1</name>
<gene>
    <name evidence="1" type="primary">rplD</name>
    <name type="ordered locus">amb3129</name>
</gene>